<evidence type="ECO:0000250" key="1">
    <source>
        <dbReference type="UniProtKB" id="P82619"/>
    </source>
</evidence>
<evidence type="ECO:0000255" key="2"/>
<evidence type="ECO:0000269" key="3">
    <source>
    </source>
</evidence>
<evidence type="ECO:0000305" key="4"/>
<name>PPK4_PSEFV</name>
<feature type="peptide" id="PRO_0000044338" description="Pyrokinin-4">
    <location>
        <begin position="1"/>
        <end position="12"/>
    </location>
</feature>
<feature type="modified residue" description="Leucine amide" evidence="3">
    <location>
        <position position="12"/>
    </location>
</feature>
<protein>
    <recommendedName>
        <fullName>Pyrokinin-4</fullName>
    </recommendedName>
    <alternativeName>
        <fullName>YXPRL-amide</fullName>
    </alternativeName>
</protein>
<sequence>DHLPHDVYSPRL</sequence>
<dbReference type="GO" id="GO:0005576">
    <property type="term" value="C:extracellular region"/>
    <property type="evidence" value="ECO:0007669"/>
    <property type="project" value="UniProtKB-SubCell"/>
</dbReference>
<dbReference type="GO" id="GO:0007218">
    <property type="term" value="P:neuropeptide signaling pathway"/>
    <property type="evidence" value="ECO:0007669"/>
    <property type="project" value="UniProtKB-KW"/>
</dbReference>
<reference evidence="4" key="1">
    <citation type="journal article" date="2005" name="Peptides">
        <title>Peptidomics of neurohemal organs from species of the cockroach family Blattidae: how do neuropeptides of closely related species differ?</title>
        <authorList>
            <person name="Predel R."/>
            <person name="Gaede G."/>
        </authorList>
    </citation>
    <scope>PROTEIN SEQUENCE</scope>
    <scope>MASS SPECTROMETRY</scope>
    <scope>AMIDATION AT LEU-12</scope>
    <source>
        <tissue evidence="3">Corpora allata</tissue>
    </source>
</reference>
<organism>
    <name type="scientific">Pseudoderopeltis flavescens</name>
    <name type="common">Cockroach</name>
    <dbReference type="NCBI Taxonomy" id="303916"/>
    <lineage>
        <taxon>Eukaryota</taxon>
        <taxon>Metazoa</taxon>
        <taxon>Ecdysozoa</taxon>
        <taxon>Arthropoda</taxon>
        <taxon>Hexapoda</taxon>
        <taxon>Insecta</taxon>
        <taxon>Pterygota</taxon>
        <taxon>Neoptera</taxon>
        <taxon>Polyneoptera</taxon>
        <taxon>Dictyoptera</taxon>
        <taxon>Blattodea</taxon>
        <taxon>Blattoidea</taxon>
        <taxon>Blattidae</taxon>
        <taxon>Blattinae</taxon>
        <taxon>Pseudoderopeltis</taxon>
    </lineage>
</organism>
<comment type="function">
    <text evidence="1">Mediates visceral muscle contractile activity (myotropic activity).</text>
</comment>
<comment type="subcellular location">
    <subcellularLocation>
        <location evidence="4">Secreted</location>
    </subcellularLocation>
</comment>
<comment type="mass spectrometry"/>
<comment type="similarity">
    <text evidence="2">Belongs to the pyrokinin family.</text>
</comment>
<keyword id="KW-0027">Amidation</keyword>
<keyword id="KW-0903">Direct protein sequencing</keyword>
<keyword id="KW-0527">Neuropeptide</keyword>
<keyword id="KW-0964">Secreted</keyword>
<proteinExistence type="evidence at protein level"/>
<accession>P84417</accession>